<sequence>MDIEKKIELVSRKPTEEVLTVDNLKDLLEMGMPLQHYIGFEISGYIHLGTGLMAGAKIADFQKAGIKTRVFLADWHSWINDKLGGDLEVIQKVALGYFKEGMKQSIKVMGGDPEKVEFVLASEILERGDYWRTIIDISKNVTLARMMRSITIMGRQMGEAIDFAKLIYPAMQVADIFYQGVNIAHAGMDQRKAHVIAREVAEKLKYHPLVWDGKKVKPIAVHHHLLLGLQEPPKWPIEGEEEFKEIKAQMKMSKSKPYSAVFIHDTPEEIKQKLRKAFCPAGEVNYNPVLDWAEHIIFREEPTEFTIHRPAKFGGDVTYTTFEELKRDFAEGKLHPLDLKNAVAEYLVELLKPVREYFEKHPEPLELMKSVQITR</sequence>
<organism>
    <name type="scientific">Thermococcus sibiricus (strain DSM 12597 / MM 739)</name>
    <dbReference type="NCBI Taxonomy" id="604354"/>
    <lineage>
        <taxon>Archaea</taxon>
        <taxon>Methanobacteriati</taxon>
        <taxon>Methanobacteriota</taxon>
        <taxon>Thermococci</taxon>
        <taxon>Thermococcales</taxon>
        <taxon>Thermococcaceae</taxon>
        <taxon>Thermococcus</taxon>
    </lineage>
</organism>
<evidence type="ECO:0000255" key="1">
    <source>
        <dbReference type="HAMAP-Rule" id="MF_02009"/>
    </source>
</evidence>
<name>SYY_THESM</name>
<keyword id="KW-0030">Aminoacyl-tRNA synthetase</keyword>
<keyword id="KW-0067">ATP-binding</keyword>
<keyword id="KW-0963">Cytoplasm</keyword>
<keyword id="KW-0436">Ligase</keyword>
<keyword id="KW-0547">Nucleotide-binding</keyword>
<keyword id="KW-0648">Protein biosynthesis</keyword>
<keyword id="KW-1185">Reference proteome</keyword>
<protein>
    <recommendedName>
        <fullName evidence="1">Tyrosine--tRNA ligase</fullName>
        <ecNumber evidence="1">6.1.1.1</ecNumber>
    </recommendedName>
    <alternativeName>
        <fullName evidence="1">Tyrosyl-tRNA synthetase</fullName>
        <shortName evidence="1">TyrRS</shortName>
    </alternativeName>
</protein>
<gene>
    <name evidence="1" type="primary">tyrS</name>
    <name type="ordered locus">TSIB_0224</name>
</gene>
<accession>C6A0Z6</accession>
<dbReference type="EC" id="6.1.1.1" evidence="1"/>
<dbReference type="EMBL" id="CP001463">
    <property type="protein sequence ID" value="ACS89291.1"/>
    <property type="molecule type" value="Genomic_DNA"/>
</dbReference>
<dbReference type="RefSeq" id="WP_012766252.1">
    <property type="nucleotide sequence ID" value="NC_012883.1"/>
</dbReference>
<dbReference type="SMR" id="C6A0Z6"/>
<dbReference type="STRING" id="604354.TSIB_0224"/>
<dbReference type="GeneID" id="8095196"/>
<dbReference type="KEGG" id="tsi:TSIB_0224"/>
<dbReference type="eggNOG" id="arCOG01886">
    <property type="taxonomic scope" value="Archaea"/>
</dbReference>
<dbReference type="HOGENOM" id="CLU_035267_1_1_2"/>
<dbReference type="OrthoDB" id="8389at2157"/>
<dbReference type="Proteomes" id="UP000009079">
    <property type="component" value="Chromosome"/>
</dbReference>
<dbReference type="GO" id="GO:0005737">
    <property type="term" value="C:cytoplasm"/>
    <property type="evidence" value="ECO:0007669"/>
    <property type="project" value="UniProtKB-SubCell"/>
</dbReference>
<dbReference type="GO" id="GO:0005524">
    <property type="term" value="F:ATP binding"/>
    <property type="evidence" value="ECO:0007669"/>
    <property type="project" value="UniProtKB-UniRule"/>
</dbReference>
<dbReference type="GO" id="GO:0004831">
    <property type="term" value="F:tyrosine-tRNA ligase activity"/>
    <property type="evidence" value="ECO:0007669"/>
    <property type="project" value="UniProtKB-UniRule"/>
</dbReference>
<dbReference type="GO" id="GO:0006437">
    <property type="term" value="P:tyrosyl-tRNA aminoacylation"/>
    <property type="evidence" value="ECO:0007669"/>
    <property type="project" value="UniProtKB-UniRule"/>
</dbReference>
<dbReference type="Gene3D" id="3.40.50.620">
    <property type="entry name" value="HUPs"/>
    <property type="match status" value="1"/>
</dbReference>
<dbReference type="Gene3D" id="1.10.240.10">
    <property type="entry name" value="Tyrosyl-Transfer RNA Synthetase"/>
    <property type="match status" value="1"/>
</dbReference>
<dbReference type="HAMAP" id="MF_02009">
    <property type="entry name" value="Tyr_tRNA_synth_type4"/>
    <property type="match status" value="1"/>
</dbReference>
<dbReference type="InterPro" id="IPR002305">
    <property type="entry name" value="aa-tRNA-synth_Ic"/>
</dbReference>
<dbReference type="InterPro" id="IPR014729">
    <property type="entry name" value="Rossmann-like_a/b/a_fold"/>
</dbReference>
<dbReference type="InterPro" id="IPR023678">
    <property type="entry name" value="Tyr-tRNA-ligase_4"/>
</dbReference>
<dbReference type="InterPro" id="IPR023617">
    <property type="entry name" value="Tyr-tRNA-ligase_arc/euk-type"/>
</dbReference>
<dbReference type="InterPro" id="IPR050489">
    <property type="entry name" value="Tyr-tRNA_synthase"/>
</dbReference>
<dbReference type="NCBIfam" id="NF006330">
    <property type="entry name" value="PRK08560.1"/>
    <property type="match status" value="1"/>
</dbReference>
<dbReference type="PANTHER" id="PTHR46264:SF4">
    <property type="entry name" value="TYROSINE--TRNA LIGASE, CYTOPLASMIC"/>
    <property type="match status" value="1"/>
</dbReference>
<dbReference type="PANTHER" id="PTHR46264">
    <property type="entry name" value="TYROSINE-TRNA LIGASE"/>
    <property type="match status" value="1"/>
</dbReference>
<dbReference type="Pfam" id="PF00579">
    <property type="entry name" value="tRNA-synt_1b"/>
    <property type="match status" value="1"/>
</dbReference>
<dbReference type="PIRSF" id="PIRSF006588">
    <property type="entry name" value="TyrRS_arch_euk"/>
    <property type="match status" value="1"/>
</dbReference>
<dbReference type="SUPFAM" id="SSF52374">
    <property type="entry name" value="Nucleotidylyl transferase"/>
    <property type="match status" value="1"/>
</dbReference>
<comment type="function">
    <text evidence="1">Catalyzes the attachment of tyrosine to tRNA(Tyr) in a two-step reaction: tyrosine is first activated by ATP to form Tyr-AMP and then transferred to the acceptor end of tRNA(Tyr).</text>
</comment>
<comment type="catalytic activity">
    <reaction evidence="1">
        <text>tRNA(Tyr) + L-tyrosine + ATP = L-tyrosyl-tRNA(Tyr) + AMP + diphosphate + H(+)</text>
        <dbReference type="Rhea" id="RHEA:10220"/>
        <dbReference type="Rhea" id="RHEA-COMP:9706"/>
        <dbReference type="Rhea" id="RHEA-COMP:9707"/>
        <dbReference type="ChEBI" id="CHEBI:15378"/>
        <dbReference type="ChEBI" id="CHEBI:30616"/>
        <dbReference type="ChEBI" id="CHEBI:33019"/>
        <dbReference type="ChEBI" id="CHEBI:58315"/>
        <dbReference type="ChEBI" id="CHEBI:78442"/>
        <dbReference type="ChEBI" id="CHEBI:78536"/>
        <dbReference type="ChEBI" id="CHEBI:456215"/>
        <dbReference type="EC" id="6.1.1.1"/>
    </reaction>
</comment>
<comment type="subunit">
    <text evidence="1">Homodimer.</text>
</comment>
<comment type="subcellular location">
    <subcellularLocation>
        <location evidence="1">Cytoplasm</location>
    </subcellularLocation>
</comment>
<comment type="similarity">
    <text evidence="1">Belongs to the class-I aminoacyl-tRNA synthetase family. TyrS type 4 subfamily.</text>
</comment>
<feature type="chain" id="PRO_1000216407" description="Tyrosine--tRNA ligase">
    <location>
        <begin position="1"/>
        <end position="375"/>
    </location>
</feature>
<feature type="short sequence motif" description="'KMSKS' region">
    <location>
        <begin position="251"/>
        <end position="255"/>
    </location>
</feature>
<feature type="binding site" evidence="1">
    <location>
        <position position="37"/>
    </location>
    <ligand>
        <name>L-tyrosine</name>
        <dbReference type="ChEBI" id="CHEBI:58315"/>
    </ligand>
</feature>
<feature type="binding site" evidence="1">
    <location>
        <position position="168"/>
    </location>
    <ligand>
        <name>L-tyrosine</name>
        <dbReference type="ChEBI" id="CHEBI:58315"/>
    </ligand>
</feature>
<feature type="binding site" evidence="1">
    <location>
        <position position="172"/>
    </location>
    <ligand>
        <name>L-tyrosine</name>
        <dbReference type="ChEBI" id="CHEBI:58315"/>
    </ligand>
</feature>
<feature type="binding site" evidence="1">
    <location>
        <position position="175"/>
    </location>
    <ligand>
        <name>L-tyrosine</name>
        <dbReference type="ChEBI" id="CHEBI:58315"/>
    </ligand>
</feature>
<feature type="binding site" evidence="1">
    <location>
        <position position="190"/>
    </location>
    <ligand>
        <name>L-tyrosine</name>
        <dbReference type="ChEBI" id="CHEBI:58315"/>
    </ligand>
</feature>
<feature type="binding site" evidence="1">
    <location>
        <position position="254"/>
    </location>
    <ligand>
        <name>ATP</name>
        <dbReference type="ChEBI" id="CHEBI:30616"/>
    </ligand>
</feature>
<proteinExistence type="inferred from homology"/>
<reference key="1">
    <citation type="journal article" date="2009" name="Appl. Environ. Microbiol.">
        <title>Metabolic versatility and indigenous origin of the archaeon Thermococcus sibiricus, isolated from a siberian oil reservoir, as revealed by genome analysis.</title>
        <authorList>
            <person name="Mardanov A.V."/>
            <person name="Ravin N.V."/>
            <person name="Svetlitchnyi V.A."/>
            <person name="Beletsky A.V."/>
            <person name="Miroshnichenko M.L."/>
            <person name="Bonch-Osmolovskaya E.A."/>
            <person name="Skryabin K.G."/>
        </authorList>
    </citation>
    <scope>NUCLEOTIDE SEQUENCE [LARGE SCALE GENOMIC DNA]</scope>
    <source>
        <strain>DSM 12597 / MM 739</strain>
    </source>
</reference>